<sequence>MYGMLYESVQHYVQEEYGVDIWRKVCHIIDCKHNSFKTHQIYPDKLMPDIAEALSACTGESFDFCMNFFGRCFVRFFSNFGYDKMIRSTGRYFCDFLQSIDNIHLIMRFTYPKMKSPSMQLTNMDDNGAVILYRSSRTGMSKYLIGQMTEVAREFYGLEIKAYVIESQNDISGGTAGPIKLTDGPLTVIVKYRLDFDNREYMAKRVNTEAHPSQLKMPTVKLDVFLDLFPFTFVLNHDMKITHAGEKIVETWIMHNPGANPKSFIGTHVMDLFQCRRPKDTTIDWDTLIQMRAVLFEFELIRTGHNRAAYDAVLNMDFENYDEMDLNEAQTMALAKAQEFSESHPVDDDESAREDEIDPATGERRSSQGLRSILLKGQMFYIKDVDSLIFLCSPLIENLDELHGIGLYLNDLNPHGLSRELVMAGWQHCSKLEIMFEKEEQRSDELEKSLELADSWKRQGDELLYSMIPRPIAERMRLSEEQVCQSFEEVSVIFLEVMNVYDEGLNSIQGAMQTVNTLNKVFSALDEEIISPFVYKVETVGMVYMAVSGAPDVNPLHAEHACDLALRVMKKFKAHDMGDVAIRVGINSGPVVAGVVGQKVPRYCLFGDTVNTASRMESSSDPWKIQLSKYTGDKVRQVGYKVESRGTVQVKGKGDMETYWLLEGPEG</sequence>
<organism>
    <name type="scientific">Drosophila melanogaster</name>
    <name type="common">Fruit fly</name>
    <dbReference type="NCBI Taxonomy" id="7227"/>
    <lineage>
        <taxon>Eukaryota</taxon>
        <taxon>Metazoa</taxon>
        <taxon>Ecdysozoa</taxon>
        <taxon>Arthropoda</taxon>
        <taxon>Hexapoda</taxon>
        <taxon>Insecta</taxon>
        <taxon>Pterygota</taxon>
        <taxon>Neoptera</taxon>
        <taxon>Endopterygota</taxon>
        <taxon>Diptera</taxon>
        <taxon>Brachycera</taxon>
        <taxon>Muscomorpha</taxon>
        <taxon>Ephydroidea</taxon>
        <taxon>Drosophilidae</taxon>
        <taxon>Drosophila</taxon>
        <taxon>Sophophora</taxon>
    </lineage>
</organism>
<feature type="chain" id="PRO_0000074106" description="Soluble guanylate cyclase 89Da">
    <location>
        <begin position="1"/>
        <end position="667"/>
    </location>
</feature>
<feature type="domain" description="Guanylate cyclase" evidence="4">
    <location>
        <begin position="491"/>
        <end position="617"/>
    </location>
</feature>
<feature type="region of interest" description="Disordered" evidence="5">
    <location>
        <begin position="337"/>
        <end position="364"/>
    </location>
</feature>
<feature type="coiled-coil region" evidence="3">
    <location>
        <begin position="427"/>
        <end position="455"/>
    </location>
</feature>
<feature type="compositionally biased region" description="Acidic residues" evidence="5">
    <location>
        <begin position="347"/>
        <end position="358"/>
    </location>
</feature>
<feature type="binding site" description="proximal binding residue" evidence="2">
    <location>
        <position position="104"/>
    </location>
    <ligand>
        <name>heme</name>
        <dbReference type="ChEBI" id="CHEBI:30413"/>
    </ligand>
    <ligandPart>
        <name>Fe</name>
        <dbReference type="ChEBI" id="CHEBI:18248"/>
    </ligandPart>
</feature>
<keyword id="KW-0141">cGMP biosynthesis</keyword>
<keyword id="KW-0175">Coiled coil</keyword>
<keyword id="KW-0963">Cytoplasm</keyword>
<keyword id="KW-0342">GTP-binding</keyword>
<keyword id="KW-0349">Heme</keyword>
<keyword id="KW-0408">Iron</keyword>
<keyword id="KW-0456">Lyase</keyword>
<keyword id="KW-0460">Magnesium</keyword>
<keyword id="KW-0464">Manganese</keyword>
<keyword id="KW-0479">Metal-binding</keyword>
<keyword id="KW-0547">Nucleotide-binding</keyword>
<keyword id="KW-1185">Reference proteome</keyword>
<dbReference type="EC" id="4.6.1.2"/>
<dbReference type="EMBL" id="AE014297">
    <property type="protein sequence ID" value="ABI31174.1"/>
    <property type="molecule type" value="Genomic_DNA"/>
</dbReference>
<dbReference type="EMBL" id="BT022818">
    <property type="protein sequence ID" value="AAY55234.1"/>
    <property type="molecule type" value="mRNA"/>
</dbReference>
<dbReference type="EMBL" id="BT022843">
    <property type="protein sequence ID" value="AAY55259.1"/>
    <property type="molecule type" value="mRNA"/>
</dbReference>
<dbReference type="EMBL" id="BT022855">
    <property type="protein sequence ID" value="AAY55271.1"/>
    <property type="status" value="ALT_FRAME"/>
    <property type="molecule type" value="mRNA"/>
</dbReference>
<dbReference type="RefSeq" id="NP_001036718.1">
    <property type="nucleotide sequence ID" value="NM_001043253.1"/>
</dbReference>
<dbReference type="RefSeq" id="NP_001036719.1">
    <property type="nucleotide sequence ID" value="NM_001043254.2"/>
</dbReference>
<dbReference type="SMR" id="Q9VEU6"/>
<dbReference type="BioGRID" id="67046">
    <property type="interactions" value="5"/>
</dbReference>
<dbReference type="FunCoup" id="Q9VEU6">
    <property type="interactions" value="90"/>
</dbReference>
<dbReference type="IntAct" id="Q9VEU6">
    <property type="interactions" value="1"/>
</dbReference>
<dbReference type="STRING" id="7227.FBpp0110263"/>
<dbReference type="PaxDb" id="7227-FBpp0110262"/>
<dbReference type="DNASU" id="42001"/>
<dbReference type="EnsemblMetazoa" id="FBtr0110962">
    <property type="protein sequence ID" value="FBpp0110262"/>
    <property type="gene ID" value="FBgn0038435"/>
</dbReference>
<dbReference type="EnsemblMetazoa" id="FBtr0110963">
    <property type="protein sequence ID" value="FBpp0110263"/>
    <property type="gene ID" value="FBgn0038435"/>
</dbReference>
<dbReference type="GeneID" id="42001"/>
<dbReference type="KEGG" id="dme:Dmel_CG14885"/>
<dbReference type="AGR" id="FB:FBgn0038435"/>
<dbReference type="CTD" id="42001"/>
<dbReference type="FlyBase" id="FBgn0038435">
    <property type="gene designation" value="Gyc89Da"/>
</dbReference>
<dbReference type="VEuPathDB" id="VectorBase:FBgn0038435"/>
<dbReference type="eggNOG" id="KOG4171">
    <property type="taxonomic scope" value="Eukaryota"/>
</dbReference>
<dbReference type="GeneTree" id="ENSGT00940000165461"/>
<dbReference type="HOGENOM" id="CLU_011614_4_1_1"/>
<dbReference type="InParanoid" id="Q9VEU6"/>
<dbReference type="OMA" id="YTAEKVR"/>
<dbReference type="OrthoDB" id="60033at2759"/>
<dbReference type="PhylomeDB" id="Q9VEU6"/>
<dbReference type="BRENDA" id="4.6.1.2">
    <property type="organism ID" value="1994"/>
</dbReference>
<dbReference type="BioGRID-ORCS" id="42001">
    <property type="hits" value="0 hits in 1 CRISPR screen"/>
</dbReference>
<dbReference type="GenomeRNAi" id="42001"/>
<dbReference type="PRO" id="PR:Q9VEU6"/>
<dbReference type="Proteomes" id="UP000000803">
    <property type="component" value="Chromosome 3R"/>
</dbReference>
<dbReference type="Bgee" id="FBgn0038435">
    <property type="expression patterns" value="Expressed in adult capability neuron in brain and 5 other cell types or tissues"/>
</dbReference>
<dbReference type="ExpressionAtlas" id="Q9VEU6">
    <property type="expression patterns" value="baseline and differential"/>
</dbReference>
<dbReference type="GO" id="GO:0008074">
    <property type="term" value="C:guanylate cyclase complex, soluble"/>
    <property type="evidence" value="ECO:0000314"/>
    <property type="project" value="FlyBase"/>
</dbReference>
<dbReference type="GO" id="GO:0019899">
    <property type="term" value="F:enzyme binding"/>
    <property type="evidence" value="ECO:0000353"/>
    <property type="project" value="UniProtKB"/>
</dbReference>
<dbReference type="GO" id="GO:0005525">
    <property type="term" value="F:GTP binding"/>
    <property type="evidence" value="ECO:0007669"/>
    <property type="project" value="UniProtKB-KW"/>
</dbReference>
<dbReference type="GO" id="GO:0004383">
    <property type="term" value="F:guanylate cyclase activity"/>
    <property type="evidence" value="ECO:0000314"/>
    <property type="project" value="UniProtKB"/>
</dbReference>
<dbReference type="GO" id="GO:0020037">
    <property type="term" value="F:heme binding"/>
    <property type="evidence" value="ECO:0007669"/>
    <property type="project" value="InterPro"/>
</dbReference>
<dbReference type="GO" id="GO:0046872">
    <property type="term" value="F:metal ion binding"/>
    <property type="evidence" value="ECO:0007669"/>
    <property type="project" value="UniProtKB-KW"/>
</dbReference>
<dbReference type="GO" id="GO:0019934">
    <property type="term" value="P:cGMP-mediated signaling"/>
    <property type="evidence" value="ECO:0000318"/>
    <property type="project" value="GO_Central"/>
</dbReference>
<dbReference type="GO" id="GO:0038060">
    <property type="term" value="P:nitric oxide-cGMP-mediated signaling"/>
    <property type="evidence" value="ECO:0000314"/>
    <property type="project" value="UniProtKB"/>
</dbReference>
<dbReference type="GO" id="GO:0001666">
    <property type="term" value="P:response to hypoxia"/>
    <property type="evidence" value="ECO:0000315"/>
    <property type="project" value="FlyBase"/>
</dbReference>
<dbReference type="GO" id="GO:0070482">
    <property type="term" value="P:response to oxygen levels"/>
    <property type="evidence" value="ECO:0000318"/>
    <property type="project" value="GO_Central"/>
</dbReference>
<dbReference type="GO" id="GO:0000302">
    <property type="term" value="P:response to reactive oxygen species"/>
    <property type="evidence" value="ECO:0000314"/>
    <property type="project" value="UniProtKB"/>
</dbReference>
<dbReference type="CDD" id="cd07302">
    <property type="entry name" value="CHD"/>
    <property type="match status" value="1"/>
</dbReference>
<dbReference type="FunFam" id="3.30.70.1230:FF:000038">
    <property type="entry name" value="soluble guanylate cyclase 89Da"/>
    <property type="match status" value="1"/>
</dbReference>
<dbReference type="FunFam" id="3.90.1520.10:FF:000004">
    <property type="entry name" value="soluble guanylate cyclase 89Da"/>
    <property type="match status" value="1"/>
</dbReference>
<dbReference type="Gene3D" id="6.10.250.780">
    <property type="match status" value="1"/>
</dbReference>
<dbReference type="Gene3D" id="3.90.1520.10">
    <property type="entry name" value="H-NOX domain"/>
    <property type="match status" value="1"/>
</dbReference>
<dbReference type="Gene3D" id="3.30.450.260">
    <property type="entry name" value="Haem NO binding associated domain"/>
    <property type="match status" value="1"/>
</dbReference>
<dbReference type="Gene3D" id="3.30.70.1230">
    <property type="entry name" value="Nucleotide cyclase"/>
    <property type="match status" value="1"/>
</dbReference>
<dbReference type="InterPro" id="IPR001054">
    <property type="entry name" value="A/G_cyclase"/>
</dbReference>
<dbReference type="InterPro" id="IPR018297">
    <property type="entry name" value="A/G_cyclase_CS"/>
</dbReference>
<dbReference type="InterPro" id="IPR038158">
    <property type="entry name" value="H-NOX_domain_sf"/>
</dbReference>
<dbReference type="InterPro" id="IPR011644">
    <property type="entry name" value="Heme_NO-bd"/>
</dbReference>
<dbReference type="InterPro" id="IPR011645">
    <property type="entry name" value="HNOB_dom_associated"/>
</dbReference>
<dbReference type="InterPro" id="IPR042463">
    <property type="entry name" value="HNOB_dom_associated_sf"/>
</dbReference>
<dbReference type="InterPro" id="IPR024096">
    <property type="entry name" value="NO_sig/Golgi_transp_ligand-bd"/>
</dbReference>
<dbReference type="InterPro" id="IPR029787">
    <property type="entry name" value="Nucleotide_cyclase"/>
</dbReference>
<dbReference type="PANTHER" id="PTHR45655">
    <property type="entry name" value="GUANYLATE CYCLASE SOLUBLE SUBUNIT BETA-2"/>
    <property type="match status" value="1"/>
</dbReference>
<dbReference type="PANTHER" id="PTHR45655:SF5">
    <property type="entry name" value="SOLUBLE GUANYLATE CYCLASE 89DA-RELATED"/>
    <property type="match status" value="1"/>
</dbReference>
<dbReference type="Pfam" id="PF00211">
    <property type="entry name" value="Guanylate_cyc"/>
    <property type="match status" value="1"/>
</dbReference>
<dbReference type="Pfam" id="PF07700">
    <property type="entry name" value="HNOB"/>
    <property type="match status" value="1"/>
</dbReference>
<dbReference type="Pfam" id="PF07701">
    <property type="entry name" value="HNOBA"/>
    <property type="match status" value="1"/>
</dbReference>
<dbReference type="SMART" id="SM00044">
    <property type="entry name" value="CYCc"/>
    <property type="match status" value="1"/>
</dbReference>
<dbReference type="SUPFAM" id="SSF111126">
    <property type="entry name" value="Ligand-binding domain in the NO signalling and Golgi transport"/>
    <property type="match status" value="1"/>
</dbReference>
<dbReference type="SUPFAM" id="SSF55073">
    <property type="entry name" value="Nucleotide cyclase"/>
    <property type="match status" value="1"/>
</dbReference>
<dbReference type="PROSITE" id="PS00452">
    <property type="entry name" value="GUANYLATE_CYCLASE_1"/>
    <property type="match status" value="1"/>
</dbReference>
<dbReference type="PROSITE" id="PS50125">
    <property type="entry name" value="GUANYLATE_CYCLASE_2"/>
    <property type="match status" value="1"/>
</dbReference>
<reference key="1">
    <citation type="journal article" date="2000" name="Science">
        <title>The genome sequence of Drosophila melanogaster.</title>
        <authorList>
            <person name="Adams M.D."/>
            <person name="Celniker S.E."/>
            <person name="Holt R.A."/>
            <person name="Evans C.A."/>
            <person name="Gocayne J.D."/>
            <person name="Amanatides P.G."/>
            <person name="Scherer S.E."/>
            <person name="Li P.W."/>
            <person name="Hoskins R.A."/>
            <person name="Galle R.F."/>
            <person name="George R.A."/>
            <person name="Lewis S.E."/>
            <person name="Richards S."/>
            <person name="Ashburner M."/>
            <person name="Henderson S.N."/>
            <person name="Sutton G.G."/>
            <person name="Wortman J.R."/>
            <person name="Yandell M.D."/>
            <person name="Zhang Q."/>
            <person name="Chen L.X."/>
            <person name="Brandon R.C."/>
            <person name="Rogers Y.-H.C."/>
            <person name="Blazej R.G."/>
            <person name="Champe M."/>
            <person name="Pfeiffer B.D."/>
            <person name="Wan K.H."/>
            <person name="Doyle C."/>
            <person name="Baxter E.G."/>
            <person name="Helt G."/>
            <person name="Nelson C.R."/>
            <person name="Miklos G.L.G."/>
            <person name="Abril J.F."/>
            <person name="Agbayani A."/>
            <person name="An H.-J."/>
            <person name="Andrews-Pfannkoch C."/>
            <person name="Baldwin D."/>
            <person name="Ballew R.M."/>
            <person name="Basu A."/>
            <person name="Baxendale J."/>
            <person name="Bayraktaroglu L."/>
            <person name="Beasley E.M."/>
            <person name="Beeson K.Y."/>
            <person name="Benos P.V."/>
            <person name="Berman B.P."/>
            <person name="Bhandari D."/>
            <person name="Bolshakov S."/>
            <person name="Borkova D."/>
            <person name="Botchan M.R."/>
            <person name="Bouck J."/>
            <person name="Brokstein P."/>
            <person name="Brottier P."/>
            <person name="Burtis K.C."/>
            <person name="Busam D.A."/>
            <person name="Butler H."/>
            <person name="Cadieu E."/>
            <person name="Center A."/>
            <person name="Chandra I."/>
            <person name="Cherry J.M."/>
            <person name="Cawley S."/>
            <person name="Dahlke C."/>
            <person name="Davenport L.B."/>
            <person name="Davies P."/>
            <person name="de Pablos B."/>
            <person name="Delcher A."/>
            <person name="Deng Z."/>
            <person name="Mays A.D."/>
            <person name="Dew I."/>
            <person name="Dietz S.M."/>
            <person name="Dodson K."/>
            <person name="Doup L.E."/>
            <person name="Downes M."/>
            <person name="Dugan-Rocha S."/>
            <person name="Dunkov B.C."/>
            <person name="Dunn P."/>
            <person name="Durbin K.J."/>
            <person name="Evangelista C.C."/>
            <person name="Ferraz C."/>
            <person name="Ferriera S."/>
            <person name="Fleischmann W."/>
            <person name="Fosler C."/>
            <person name="Gabrielian A.E."/>
            <person name="Garg N.S."/>
            <person name="Gelbart W.M."/>
            <person name="Glasser K."/>
            <person name="Glodek A."/>
            <person name="Gong F."/>
            <person name="Gorrell J.H."/>
            <person name="Gu Z."/>
            <person name="Guan P."/>
            <person name="Harris M."/>
            <person name="Harris N.L."/>
            <person name="Harvey D.A."/>
            <person name="Heiman T.J."/>
            <person name="Hernandez J.R."/>
            <person name="Houck J."/>
            <person name="Hostin D."/>
            <person name="Houston K.A."/>
            <person name="Howland T.J."/>
            <person name="Wei M.-H."/>
            <person name="Ibegwam C."/>
            <person name="Jalali M."/>
            <person name="Kalush F."/>
            <person name="Karpen G.H."/>
            <person name="Ke Z."/>
            <person name="Kennison J.A."/>
            <person name="Ketchum K.A."/>
            <person name="Kimmel B.E."/>
            <person name="Kodira C.D."/>
            <person name="Kraft C.L."/>
            <person name="Kravitz S."/>
            <person name="Kulp D."/>
            <person name="Lai Z."/>
            <person name="Lasko P."/>
            <person name="Lei Y."/>
            <person name="Levitsky A.A."/>
            <person name="Li J.H."/>
            <person name="Li Z."/>
            <person name="Liang Y."/>
            <person name="Lin X."/>
            <person name="Liu X."/>
            <person name="Mattei B."/>
            <person name="McIntosh T.C."/>
            <person name="McLeod M.P."/>
            <person name="McPherson D."/>
            <person name="Merkulov G."/>
            <person name="Milshina N.V."/>
            <person name="Mobarry C."/>
            <person name="Morris J."/>
            <person name="Moshrefi A."/>
            <person name="Mount S.M."/>
            <person name="Moy M."/>
            <person name="Murphy B."/>
            <person name="Murphy L."/>
            <person name="Muzny D.M."/>
            <person name="Nelson D.L."/>
            <person name="Nelson D.R."/>
            <person name="Nelson K.A."/>
            <person name="Nixon K."/>
            <person name="Nusskern D.R."/>
            <person name="Pacleb J.M."/>
            <person name="Palazzolo M."/>
            <person name="Pittman G.S."/>
            <person name="Pan S."/>
            <person name="Pollard J."/>
            <person name="Puri V."/>
            <person name="Reese M.G."/>
            <person name="Reinert K."/>
            <person name="Remington K."/>
            <person name="Saunders R.D.C."/>
            <person name="Scheeler F."/>
            <person name="Shen H."/>
            <person name="Shue B.C."/>
            <person name="Siden-Kiamos I."/>
            <person name="Simpson M."/>
            <person name="Skupski M.P."/>
            <person name="Smith T.J."/>
            <person name="Spier E."/>
            <person name="Spradling A.C."/>
            <person name="Stapleton M."/>
            <person name="Strong R."/>
            <person name="Sun E."/>
            <person name="Svirskas R."/>
            <person name="Tector C."/>
            <person name="Turner R."/>
            <person name="Venter E."/>
            <person name="Wang A.H."/>
            <person name="Wang X."/>
            <person name="Wang Z.-Y."/>
            <person name="Wassarman D.A."/>
            <person name="Weinstock G.M."/>
            <person name="Weissenbach J."/>
            <person name="Williams S.M."/>
            <person name="Woodage T."/>
            <person name="Worley K.C."/>
            <person name="Wu D."/>
            <person name="Yang S."/>
            <person name="Yao Q.A."/>
            <person name="Ye J."/>
            <person name="Yeh R.-F."/>
            <person name="Zaveri J.S."/>
            <person name="Zhan M."/>
            <person name="Zhang G."/>
            <person name="Zhao Q."/>
            <person name="Zheng L."/>
            <person name="Zheng X.H."/>
            <person name="Zhong F.N."/>
            <person name="Zhong W."/>
            <person name="Zhou X."/>
            <person name="Zhu S.C."/>
            <person name="Zhu X."/>
            <person name="Smith H.O."/>
            <person name="Gibbs R.A."/>
            <person name="Myers E.W."/>
            <person name="Rubin G.M."/>
            <person name="Venter J.C."/>
        </authorList>
    </citation>
    <scope>NUCLEOTIDE SEQUENCE [LARGE SCALE GENOMIC DNA]</scope>
    <source>
        <strain evidence="6">Berkeley</strain>
    </source>
</reference>
<reference evidence="9" key="2">
    <citation type="journal article" date="2002" name="Genome Biol.">
        <title>Annotation of the Drosophila melanogaster euchromatic genome: a systematic review.</title>
        <authorList>
            <person name="Misra S."/>
            <person name="Crosby M.A."/>
            <person name="Mungall C.J."/>
            <person name="Matthews B.B."/>
            <person name="Campbell K.S."/>
            <person name="Hradecky P."/>
            <person name="Huang Y."/>
            <person name="Kaminker J.S."/>
            <person name="Millburn G.H."/>
            <person name="Prochnik S.E."/>
            <person name="Smith C.D."/>
            <person name="Tupy J.L."/>
            <person name="Whitfield E.J."/>
            <person name="Bayraktaroglu L."/>
            <person name="Berman B.P."/>
            <person name="Bettencourt B.R."/>
            <person name="Celniker S.E."/>
            <person name="de Grey A.D.N.J."/>
            <person name="Drysdale R.A."/>
            <person name="Harris N.L."/>
            <person name="Richter J."/>
            <person name="Russo S."/>
            <person name="Schroeder A.J."/>
            <person name="Shu S.Q."/>
            <person name="Stapleton M."/>
            <person name="Yamada C."/>
            <person name="Ashburner M."/>
            <person name="Gelbart W.M."/>
            <person name="Rubin G.M."/>
            <person name="Lewis S.E."/>
        </authorList>
    </citation>
    <scope>GENOME REANNOTATION</scope>
    <source>
        <strain>Berkeley</strain>
    </source>
</reference>
<reference evidence="10" key="3">
    <citation type="submission" date="2005-05" db="EMBL/GenBank/DDBJ databases">
        <authorList>
            <person name="Stapleton M."/>
            <person name="Carlson J.W."/>
            <person name="Chavez C."/>
            <person name="Frise E."/>
            <person name="George R.A."/>
            <person name="Pacleb J.M."/>
            <person name="Park S."/>
            <person name="Wan K.H."/>
            <person name="Yu C."/>
            <person name="Celniker S.E."/>
        </authorList>
    </citation>
    <scope>NUCLEOTIDE SEQUENCE [LARGE SCALE MRNA]</scope>
    <source>
        <strain>Berkeley</strain>
    </source>
</reference>
<reference evidence="9" key="4">
    <citation type="journal article" date="2004" name="J. Biol. Chem.">
        <title>Atypical soluble guanylyl cyclases in Drosophila can function as molecular oxygen sensors.</title>
        <authorList>
            <person name="Morton D.B."/>
        </authorList>
    </citation>
    <scope>FUNCTION</scope>
    <scope>INTERACTION WITH GYC88E</scope>
</reference>
<reference evidence="9" key="5">
    <citation type="journal article" date="2004" name="J. Exp. Biol.">
        <title>Preliminary characterization of two atypical soluble guanylyl cyclases in the central and peripheral nervous system of Drosophila melanogaster.</title>
        <authorList>
            <person name="Langlais K.K."/>
            <person name="Stewart J.A."/>
            <person name="Morton D.B."/>
        </authorList>
    </citation>
    <scope>INTERACTION WITH GYC88E</scope>
</reference>
<proteinExistence type="evidence at protein level"/>
<name>GCYDA_DROME</name>
<accession>Q9VEU6</accession>
<accession>Q0KI63</accession>
<accession>Q4V501</accession>
<comment type="function">
    <text evidence="7">Heterodimers with Gyc-89Da and Gyc-89Db are activated in response to changing oxygen concentrations, alerting flies to hypoxic environments. Under normal oxygen concentrations, oxygen binds to the heme group and results in low levels of guanylyl cyclase activity. When exposed to reduced oxygen concentrations, the oxygen dissociates from the heme group resulting in activation of the enzyme.</text>
</comment>
<comment type="catalytic activity">
    <reaction evidence="8">
        <text>GTP = 3',5'-cyclic GMP + diphosphate</text>
        <dbReference type="Rhea" id="RHEA:13665"/>
        <dbReference type="ChEBI" id="CHEBI:33019"/>
        <dbReference type="ChEBI" id="CHEBI:37565"/>
        <dbReference type="ChEBI" id="CHEBI:57746"/>
        <dbReference type="EC" id="4.6.1.2"/>
    </reaction>
</comment>
<comment type="cofactor">
    <cofactor evidence="1">
        <name>heme</name>
        <dbReference type="ChEBI" id="CHEBI:30413"/>
    </cofactor>
    <text evidence="1">Binds 1 or 2 heme groups per heterodimer.</text>
</comment>
<comment type="activity regulation">
    <text evidence="8">Probably not activated by nitric oxide (NO). Heterodimer also exhibits some stimulation, some compounds (SIN-1 and two of the NONOates) that were ineffective at stimulating Gyc-88E alone did stimulate the heterodimer.</text>
</comment>
<comment type="subunit">
    <text evidence="7 8">Heterodimer; with Gyc88E, in the presence of magnesium or manganese.</text>
</comment>
<comment type="subcellular location">
    <subcellularLocation>
        <location evidence="1">Cytoplasm</location>
    </subcellularLocation>
</comment>
<comment type="miscellaneous">
    <text evidence="9">There are two types of guanylate cyclases: soluble forms and membrane-associated receptor forms.</text>
</comment>
<comment type="similarity">
    <text evidence="4">Belongs to the adenylyl cyclase class-4/guanylyl cyclase family.</text>
</comment>
<comment type="sequence caution" evidence="9">
    <conflict type="frameshift">
        <sequence resource="EMBL-CDS" id="AAY55271"/>
    </conflict>
</comment>
<protein>
    <recommendedName>
        <fullName>Soluble guanylate cyclase 89Da</fullName>
        <ecNumber>4.6.1.2</ecNumber>
    </recommendedName>
</protein>
<gene>
    <name evidence="11" type="primary">Gyc89Da</name>
    <name evidence="11" type="synonym">Gyc-89Da</name>
    <name evidence="11" type="ORF">CG14885</name>
</gene>
<evidence type="ECO:0000250" key="1"/>
<evidence type="ECO:0000250" key="2">
    <source>
        <dbReference type="UniProtKB" id="P16068"/>
    </source>
</evidence>
<evidence type="ECO:0000255" key="3"/>
<evidence type="ECO:0000255" key="4">
    <source>
        <dbReference type="PROSITE-ProRule" id="PRU00099"/>
    </source>
</evidence>
<evidence type="ECO:0000256" key="5">
    <source>
        <dbReference type="SAM" id="MobiDB-lite"/>
    </source>
</evidence>
<evidence type="ECO:0000269" key="6">
    <source>
    </source>
</evidence>
<evidence type="ECO:0000269" key="7">
    <source>
    </source>
</evidence>
<evidence type="ECO:0000303" key="8">
    <source>
    </source>
</evidence>
<evidence type="ECO:0000305" key="9"/>
<evidence type="ECO:0000312" key="10">
    <source>
        <dbReference type="EMBL" id="AAY55259.1"/>
    </source>
</evidence>
<evidence type="ECO:0000312" key="11">
    <source>
        <dbReference type="FlyBase" id="FBgn0038435"/>
    </source>
</evidence>